<comment type="function">
    <text evidence="1">Site-specific tyrosine recombinase, which acts by catalyzing the cutting and rejoining of the recombining DNA molecules.</text>
</comment>
<comment type="subcellular location">
    <subcellularLocation>
        <location evidence="4">Cytoplasm</location>
    </subcellularLocation>
</comment>
<comment type="miscellaneous">
    <text evidence="4">Although strongly related to the XerC and XerD proteins, it lacks the Tyr active site, as well as the Arg-His-Arg-His (R-H-R-H) sandwich residues that are clustered with it. It however contains the Thr-Arg-Gln tripeptide, which is characteristic of the XerD subfamily.</text>
</comment>
<comment type="similarity">
    <text evidence="4">Belongs to the 'phage' integrase family.</text>
</comment>
<name>XER_CALS4</name>
<feature type="chain" id="PRO_0000095435" description="Putative tyrosine recombinase TTE1313">
    <location>
        <begin position="1"/>
        <end position="290"/>
    </location>
</feature>
<feature type="domain" description="Core-binding (CB)" evidence="3">
    <location>
        <begin position="1"/>
        <end position="85"/>
    </location>
</feature>
<feature type="domain" description="Tyr recombinase" evidence="2">
    <location>
        <begin position="106"/>
        <end position="290"/>
    </location>
</feature>
<feature type="active site" evidence="2">
    <location>
        <position position="239"/>
    </location>
</feature>
<feature type="active site" description="O-(3'-phospho-DNA)-tyrosine intermediate" evidence="2">
    <location>
        <position position="283"/>
    </location>
</feature>
<reference key="1">
    <citation type="journal article" date="2002" name="Genome Res.">
        <title>A complete sequence of the T. tengcongensis genome.</title>
        <authorList>
            <person name="Bao Q."/>
            <person name="Tian Y."/>
            <person name="Li W."/>
            <person name="Xu Z."/>
            <person name="Xuan Z."/>
            <person name="Hu S."/>
            <person name="Dong W."/>
            <person name="Yang J."/>
            <person name="Chen Y."/>
            <person name="Xue Y."/>
            <person name="Xu Y."/>
            <person name="Lai X."/>
            <person name="Huang L."/>
            <person name="Dong X."/>
            <person name="Ma Y."/>
            <person name="Ling L."/>
            <person name="Tan H."/>
            <person name="Chen R."/>
            <person name="Wang J."/>
            <person name="Yu J."/>
            <person name="Yang H."/>
        </authorList>
    </citation>
    <scope>NUCLEOTIDE SEQUENCE [LARGE SCALE GENOMIC DNA]</scope>
    <source>
        <strain>DSM 15242 / JCM 11007 / NBRC 100824 / MB4</strain>
    </source>
</reference>
<protein>
    <recommendedName>
        <fullName evidence="4">Putative tyrosine recombinase TTE1313</fullName>
    </recommendedName>
</protein>
<organism>
    <name type="scientific">Caldanaerobacter subterraneus subsp. tengcongensis (strain DSM 15242 / JCM 11007 / NBRC 100824 / MB4)</name>
    <name type="common">Thermoanaerobacter tengcongensis</name>
    <dbReference type="NCBI Taxonomy" id="273068"/>
    <lineage>
        <taxon>Bacteria</taxon>
        <taxon>Bacillati</taxon>
        <taxon>Bacillota</taxon>
        <taxon>Clostridia</taxon>
        <taxon>Thermoanaerobacterales</taxon>
        <taxon>Thermoanaerobacteraceae</taxon>
        <taxon>Caldanaerobacter</taxon>
    </lineage>
</organism>
<keyword id="KW-0131">Cell cycle</keyword>
<keyword id="KW-0132">Cell division</keyword>
<keyword id="KW-0159">Chromosome partition</keyword>
<keyword id="KW-0963">Cytoplasm</keyword>
<keyword id="KW-0229">DNA integration</keyword>
<keyword id="KW-0233">DNA recombination</keyword>
<keyword id="KW-0238">DNA-binding</keyword>
<keyword id="KW-1185">Reference proteome</keyword>
<proteinExistence type="inferred from homology"/>
<dbReference type="EMBL" id="AE008691">
    <property type="protein sequence ID" value="AAM24537.1"/>
    <property type="molecule type" value="Genomic_DNA"/>
</dbReference>
<dbReference type="RefSeq" id="WP_011025620.1">
    <property type="nucleotide sequence ID" value="NC_003869.1"/>
</dbReference>
<dbReference type="SMR" id="Q8RAB1"/>
<dbReference type="STRING" id="273068.TTE1313"/>
<dbReference type="KEGG" id="tte:TTE1313"/>
<dbReference type="eggNOG" id="COG4974">
    <property type="taxonomic scope" value="Bacteria"/>
</dbReference>
<dbReference type="HOGENOM" id="CLU_027562_9_6_9"/>
<dbReference type="OrthoDB" id="9785687at2"/>
<dbReference type="Proteomes" id="UP000000555">
    <property type="component" value="Chromosome"/>
</dbReference>
<dbReference type="GO" id="GO:0005737">
    <property type="term" value="C:cytoplasm"/>
    <property type="evidence" value="ECO:0007669"/>
    <property type="project" value="UniProtKB-SubCell"/>
</dbReference>
<dbReference type="GO" id="GO:0003677">
    <property type="term" value="F:DNA binding"/>
    <property type="evidence" value="ECO:0007669"/>
    <property type="project" value="UniProtKB-KW"/>
</dbReference>
<dbReference type="GO" id="GO:0009009">
    <property type="term" value="F:site-specific recombinase activity"/>
    <property type="evidence" value="ECO:0007669"/>
    <property type="project" value="InterPro"/>
</dbReference>
<dbReference type="GO" id="GO:0051301">
    <property type="term" value="P:cell division"/>
    <property type="evidence" value="ECO:0007669"/>
    <property type="project" value="UniProtKB-KW"/>
</dbReference>
<dbReference type="GO" id="GO:0007059">
    <property type="term" value="P:chromosome segregation"/>
    <property type="evidence" value="ECO:0007669"/>
    <property type="project" value="UniProtKB-KW"/>
</dbReference>
<dbReference type="GO" id="GO:0006310">
    <property type="term" value="P:DNA recombination"/>
    <property type="evidence" value="ECO:0007669"/>
    <property type="project" value="UniProtKB-KW"/>
</dbReference>
<dbReference type="Gene3D" id="1.10.150.130">
    <property type="match status" value="1"/>
</dbReference>
<dbReference type="Gene3D" id="1.10.443.10">
    <property type="entry name" value="Intergrase catalytic core"/>
    <property type="match status" value="1"/>
</dbReference>
<dbReference type="InterPro" id="IPR044068">
    <property type="entry name" value="CB"/>
</dbReference>
<dbReference type="InterPro" id="IPR011010">
    <property type="entry name" value="DNA_brk_join_enz"/>
</dbReference>
<dbReference type="InterPro" id="IPR013762">
    <property type="entry name" value="Integrase-like_cat_sf"/>
</dbReference>
<dbReference type="InterPro" id="IPR002104">
    <property type="entry name" value="Integrase_catalytic"/>
</dbReference>
<dbReference type="InterPro" id="IPR010998">
    <property type="entry name" value="Integrase_recombinase_N"/>
</dbReference>
<dbReference type="InterPro" id="IPR004107">
    <property type="entry name" value="Integrase_SAM-like_N"/>
</dbReference>
<dbReference type="InterPro" id="IPR011932">
    <property type="entry name" value="Recomb_XerD"/>
</dbReference>
<dbReference type="InterPro" id="IPR050090">
    <property type="entry name" value="Tyrosine_recombinase_XerCD"/>
</dbReference>
<dbReference type="NCBIfam" id="TIGR02225">
    <property type="entry name" value="recomb_XerD"/>
    <property type="match status" value="1"/>
</dbReference>
<dbReference type="PANTHER" id="PTHR30349">
    <property type="entry name" value="PHAGE INTEGRASE-RELATED"/>
    <property type="match status" value="1"/>
</dbReference>
<dbReference type="PANTHER" id="PTHR30349:SF81">
    <property type="entry name" value="TYROSINE RECOMBINASE XERC"/>
    <property type="match status" value="1"/>
</dbReference>
<dbReference type="Pfam" id="PF02899">
    <property type="entry name" value="Phage_int_SAM_1"/>
    <property type="match status" value="1"/>
</dbReference>
<dbReference type="Pfam" id="PF00589">
    <property type="entry name" value="Phage_integrase"/>
    <property type="match status" value="1"/>
</dbReference>
<dbReference type="SUPFAM" id="SSF56349">
    <property type="entry name" value="DNA breaking-rejoining enzymes"/>
    <property type="match status" value="1"/>
</dbReference>
<dbReference type="PROSITE" id="PS51900">
    <property type="entry name" value="CB"/>
    <property type="match status" value="1"/>
</dbReference>
<dbReference type="PROSITE" id="PS51898">
    <property type="entry name" value="TYR_RECOMBINASE"/>
    <property type="match status" value="1"/>
</dbReference>
<sequence>MAESVVGEFLEFLKKNKRLSKNTLESYSRDVEQFLTYMNEHGINFCSAKKSTIVNYLYFLKQQGKSQATISRALSSIKAFYHYLFAKKKIEEDPSYGINAPKVEKKEPVTLTVEQVDMLLSFDFGKDEKGLRDKALIELMYASGLKVSEVISLKIEDVNLASGYIVVRSGKERVIPIGSYAVAALQEYIEKGRKPRKGEKALFLNLRGKRLTRQGCWKIIKEYADKISPGLPLTPNILRKSFAQHMLQNGADLKTVQEMLGYEVNFGNNLLSLVSRSKMKEVYNKFHPRA</sequence>
<accession>Q8RAB1</accession>
<evidence type="ECO:0000250" key="1">
    <source>
        <dbReference type="UniProtKB" id="P0A8P8"/>
    </source>
</evidence>
<evidence type="ECO:0000255" key="2">
    <source>
        <dbReference type="PROSITE-ProRule" id="PRU01246"/>
    </source>
</evidence>
<evidence type="ECO:0000255" key="3">
    <source>
        <dbReference type="PROSITE-ProRule" id="PRU01248"/>
    </source>
</evidence>
<evidence type="ECO:0000305" key="4"/>
<gene>
    <name type="ordered locus">TTE1313</name>
</gene>